<keyword id="KW-0067">ATP-binding</keyword>
<keyword id="KW-0131">Cell cycle</keyword>
<keyword id="KW-0132">Cell division</keyword>
<keyword id="KW-0145">Chemotaxis</keyword>
<keyword id="KW-0418">Kinase</keyword>
<keyword id="KW-0498">Mitosis</keyword>
<keyword id="KW-0547">Nucleotide-binding</keyword>
<keyword id="KW-0597">Phosphoprotein</keyword>
<keyword id="KW-1185">Reference proteome</keyword>
<keyword id="KW-0723">Serine/threonine-protein kinase</keyword>
<keyword id="KW-0808">Transferase</keyword>
<organism>
    <name type="scientific">Dictyostelium discoideum</name>
    <name type="common">Social amoeba</name>
    <dbReference type="NCBI Taxonomy" id="44689"/>
    <lineage>
        <taxon>Eukaryota</taxon>
        <taxon>Amoebozoa</taxon>
        <taxon>Evosea</taxon>
        <taxon>Eumycetozoa</taxon>
        <taxon>Dictyostelia</taxon>
        <taxon>Dictyosteliales</taxon>
        <taxon>Dictyosteliaceae</taxon>
        <taxon>Dictyostelium</taxon>
    </lineage>
</organism>
<evidence type="ECO:0000250" key="1"/>
<evidence type="ECO:0000255" key="2">
    <source>
        <dbReference type="PROSITE-ProRule" id="PRU00159"/>
    </source>
</evidence>
<evidence type="ECO:0000255" key="3">
    <source>
        <dbReference type="PROSITE-ProRule" id="PRU10027"/>
    </source>
</evidence>
<evidence type="ECO:0000256" key="4">
    <source>
        <dbReference type="SAM" id="MobiDB-lite"/>
    </source>
</evidence>
<evidence type="ECO:0000269" key="5">
    <source>
    </source>
</evidence>
<evidence type="ECO:0000269" key="6">
    <source>
    </source>
</evidence>
<evidence type="ECO:0000269" key="7">
    <source>
    </source>
</evidence>
<evidence type="ECO:0000305" key="8"/>
<proteinExistence type="evidence at protein level"/>
<sequence length="369" mass="41978">MSSEDIDKHVLRKYEVLQKIGKGAYGIVWKAIDKKTKQTVALKKIFDAFQNATDAQRTFREIMFLQELHGHENIIKLLNVIKADNDRDIYLVFEHMETDLHAVIRAKILEEIHKQYTIYQLLKALKYMHSANVLHRDIKPSNLLLNSECLVKVADFGLARSITSLESIAEANPVLTEYVATRWYRAPEILLGSTKYTKGVDMWSIGCILGELLGEKAMFPGNSTMNQLDLIIEVTGRPSAEDIEAIKSPFAGTMLESLPPSNPRSLSDMYPSASVDALDLLKKLLQFNPDKRITAEEALAHPFVTQFHNPAEEPHFDRIIKISIDDGQKFPIAEYRNRLYNDIIKKKKEERKKQTNPTKPDTTAPTLST</sequence>
<feature type="chain" id="PRO_0000312369" description="Extracellular signal-regulated kinase 2">
    <location>
        <begin position="1"/>
        <end position="369"/>
    </location>
</feature>
<feature type="domain" description="Protein kinase" evidence="2">
    <location>
        <begin position="14"/>
        <end position="304"/>
    </location>
</feature>
<feature type="region of interest" description="Disordered" evidence="4">
    <location>
        <begin position="346"/>
        <end position="369"/>
    </location>
</feature>
<feature type="short sequence motif" description="TXY">
    <location>
        <begin position="176"/>
        <end position="178"/>
    </location>
</feature>
<feature type="compositionally biased region" description="Polar residues" evidence="4">
    <location>
        <begin position="355"/>
        <end position="369"/>
    </location>
</feature>
<feature type="active site" description="Proton acceptor" evidence="2 3">
    <location>
        <position position="137"/>
    </location>
</feature>
<feature type="binding site" evidence="2">
    <location>
        <begin position="20"/>
        <end position="28"/>
    </location>
    <ligand>
        <name>ATP</name>
        <dbReference type="ChEBI" id="CHEBI:30616"/>
    </ligand>
</feature>
<feature type="binding site" evidence="2">
    <location>
        <position position="43"/>
    </location>
    <ligand>
        <name>ATP</name>
        <dbReference type="ChEBI" id="CHEBI:30616"/>
    </ligand>
</feature>
<feature type="modified residue" description="Phosphothreonine" evidence="1">
    <location>
        <position position="176"/>
    </location>
</feature>
<feature type="modified residue" description="Phosphotyrosine" evidence="1">
    <location>
        <position position="178"/>
    </location>
</feature>
<feature type="sequence conflict" description="In Ref. 1; L33043." evidence="8" ref="1">
    <original>LQ</original>
    <variation>FH</variation>
    <location>
        <begin position="17"/>
        <end position="18"/>
    </location>
</feature>
<feature type="sequence conflict" description="In Ref. 1; L33043." evidence="8" ref="1">
    <original>K</original>
    <variation>E</variation>
    <location>
        <position position="30"/>
    </location>
</feature>
<feature type="sequence conflict" description="In Ref. 1; L33043." evidence="8" ref="1">
    <original>TKQ</original>
    <variation>PHH</variation>
    <location>
        <begin position="36"/>
        <end position="38"/>
    </location>
</feature>
<feature type="sequence conflict" description="In Ref. 1; L33043." evidence="8" ref="1">
    <original>L</original>
    <variation>S</variation>
    <location>
        <position position="285"/>
    </location>
</feature>
<reference key="1">
    <citation type="journal article" date="1995" name="J. Cell Biol.">
        <title>A MAP kinase necessary for receptor-mediated activation of adenylyl cyclase in Dictyostelium.</title>
        <authorList>
            <person name="Segall J.E."/>
            <person name="Kuspa A."/>
            <person name="Shaulsky G."/>
            <person name="Ecke M."/>
            <person name="Maeda M."/>
            <person name="Gaskins C."/>
            <person name="Firtel R.A."/>
            <person name="Loomis W.F."/>
        </authorList>
    </citation>
    <scope>NUCLEOTIDE SEQUENCE [MRNA]</scope>
    <scope>FUNCTION</scope>
    <source>
        <strain>AX4</strain>
    </source>
</reference>
<reference key="2">
    <citation type="journal article" date="2005" name="Nature">
        <title>The genome of the social amoeba Dictyostelium discoideum.</title>
        <authorList>
            <person name="Eichinger L."/>
            <person name="Pachebat J.A."/>
            <person name="Gloeckner G."/>
            <person name="Rajandream M.A."/>
            <person name="Sucgang R."/>
            <person name="Berriman M."/>
            <person name="Song J."/>
            <person name="Olsen R."/>
            <person name="Szafranski K."/>
            <person name="Xu Q."/>
            <person name="Tunggal B."/>
            <person name="Kummerfeld S."/>
            <person name="Madera M."/>
            <person name="Konfortov B.A."/>
            <person name="Rivero F."/>
            <person name="Bankier A.T."/>
            <person name="Lehmann R."/>
            <person name="Hamlin N."/>
            <person name="Davies R."/>
            <person name="Gaudet P."/>
            <person name="Fey P."/>
            <person name="Pilcher K."/>
            <person name="Chen G."/>
            <person name="Saunders D."/>
            <person name="Sodergren E.J."/>
            <person name="Davis P."/>
            <person name="Kerhornou A."/>
            <person name="Nie X."/>
            <person name="Hall N."/>
            <person name="Anjard C."/>
            <person name="Hemphill L."/>
            <person name="Bason N."/>
            <person name="Farbrother P."/>
            <person name="Desany B."/>
            <person name="Just E."/>
            <person name="Morio T."/>
            <person name="Rost R."/>
            <person name="Churcher C.M."/>
            <person name="Cooper J."/>
            <person name="Haydock S."/>
            <person name="van Driessche N."/>
            <person name="Cronin A."/>
            <person name="Goodhead I."/>
            <person name="Muzny D.M."/>
            <person name="Mourier T."/>
            <person name="Pain A."/>
            <person name="Lu M."/>
            <person name="Harper D."/>
            <person name="Lindsay R."/>
            <person name="Hauser H."/>
            <person name="James K.D."/>
            <person name="Quiles M."/>
            <person name="Madan Babu M."/>
            <person name="Saito T."/>
            <person name="Buchrieser C."/>
            <person name="Wardroper A."/>
            <person name="Felder M."/>
            <person name="Thangavelu M."/>
            <person name="Johnson D."/>
            <person name="Knights A."/>
            <person name="Loulseged H."/>
            <person name="Mungall K.L."/>
            <person name="Oliver K."/>
            <person name="Price C."/>
            <person name="Quail M.A."/>
            <person name="Urushihara H."/>
            <person name="Hernandez J."/>
            <person name="Rabbinowitsch E."/>
            <person name="Steffen D."/>
            <person name="Sanders M."/>
            <person name="Ma J."/>
            <person name="Kohara Y."/>
            <person name="Sharp S."/>
            <person name="Simmonds M.N."/>
            <person name="Spiegler S."/>
            <person name="Tivey A."/>
            <person name="Sugano S."/>
            <person name="White B."/>
            <person name="Walker D."/>
            <person name="Woodward J.R."/>
            <person name="Winckler T."/>
            <person name="Tanaka Y."/>
            <person name="Shaulsky G."/>
            <person name="Schleicher M."/>
            <person name="Weinstock G.M."/>
            <person name="Rosenthal A."/>
            <person name="Cox E.C."/>
            <person name="Chisholm R.L."/>
            <person name="Gibbs R.A."/>
            <person name="Loomis W.F."/>
            <person name="Platzer M."/>
            <person name="Kay R.R."/>
            <person name="Williams J.G."/>
            <person name="Dear P.H."/>
            <person name="Noegel A.A."/>
            <person name="Barrell B.G."/>
            <person name="Kuspa A."/>
        </authorList>
    </citation>
    <scope>NUCLEOTIDE SEQUENCE [LARGE SCALE GENOMIC DNA]</scope>
    <source>
        <strain>AX4</strain>
    </source>
</reference>
<reference key="3">
    <citation type="journal article" date="1998" name="J. Cell Sci.">
        <title>MAP kinase function in amoeboid chemotaxis.</title>
        <authorList>
            <person name="Wang Y."/>
            <person name="Liu J."/>
            <person name="Segall J.E."/>
        </authorList>
    </citation>
    <scope>DISRUPTION PHENOTYPE</scope>
</reference>
<reference key="4">
    <citation type="journal article" date="2008" name="Eukaryot. Cell">
        <title>MPL1, a novel phosphatase with leucine-rich repeats, is essential for proper ERK2 phosphorylation and cell motility.</title>
        <authorList>
            <person name="Rodriguez M."/>
            <person name="Kim B."/>
            <person name="Lee N.-S."/>
            <person name="Veeranki S."/>
            <person name="Kim L."/>
        </authorList>
    </citation>
    <scope>DISRUPTION PHENOTYPE</scope>
</reference>
<gene>
    <name type="primary">erkB</name>
    <name type="synonym">dagC</name>
    <name type="synonym">erk2</name>
    <name type="ORF">DDB_G0283903</name>
</gene>
<name>ERK2_DICDI</name>
<dbReference type="EC" id="2.7.11.24"/>
<dbReference type="EMBL" id="L33043">
    <property type="status" value="NOT_ANNOTATED_CDS"/>
    <property type="molecule type" value="mRNA"/>
</dbReference>
<dbReference type="EMBL" id="AAFI02000058">
    <property type="protein sequence ID" value="EAL65439.1"/>
    <property type="molecule type" value="Genomic_DNA"/>
</dbReference>
<dbReference type="PIR" id="A56492">
    <property type="entry name" value="A56492"/>
</dbReference>
<dbReference type="RefSeq" id="XP_638833.1">
    <property type="nucleotide sequence ID" value="XM_633741.1"/>
</dbReference>
<dbReference type="SMR" id="Q54QB1"/>
<dbReference type="FunCoup" id="Q54QB1">
    <property type="interactions" value="35"/>
</dbReference>
<dbReference type="IntAct" id="Q54QB1">
    <property type="interactions" value="1"/>
</dbReference>
<dbReference type="STRING" id="44689.Q54QB1"/>
<dbReference type="PaxDb" id="44689-DDB0191457"/>
<dbReference type="EnsemblProtists" id="EAL65439">
    <property type="protein sequence ID" value="EAL65439"/>
    <property type="gene ID" value="DDB_G0283903"/>
</dbReference>
<dbReference type="GeneID" id="8624357"/>
<dbReference type="KEGG" id="ddi:DDB_G0283903"/>
<dbReference type="dictyBase" id="DDB_G0283903">
    <property type="gene designation" value="erkB"/>
</dbReference>
<dbReference type="VEuPathDB" id="AmoebaDB:DDB_G0283903"/>
<dbReference type="eggNOG" id="KOG0660">
    <property type="taxonomic scope" value="Eukaryota"/>
</dbReference>
<dbReference type="HOGENOM" id="CLU_000288_181_1_1"/>
<dbReference type="InParanoid" id="Q54QB1"/>
<dbReference type="OMA" id="MDIPRPE"/>
<dbReference type="PhylomeDB" id="Q54QB1"/>
<dbReference type="PRO" id="PR:Q54QB1"/>
<dbReference type="Proteomes" id="UP000002195">
    <property type="component" value="Chromosome 4"/>
</dbReference>
<dbReference type="GO" id="GO:0005737">
    <property type="term" value="C:cytoplasm"/>
    <property type="evidence" value="ECO:0000318"/>
    <property type="project" value="GO_Central"/>
</dbReference>
<dbReference type="GO" id="GO:0005829">
    <property type="term" value="C:cytosol"/>
    <property type="evidence" value="ECO:0000314"/>
    <property type="project" value="dictyBase"/>
</dbReference>
<dbReference type="GO" id="GO:0005634">
    <property type="term" value="C:nucleus"/>
    <property type="evidence" value="ECO:0000314"/>
    <property type="project" value="dictyBase"/>
</dbReference>
<dbReference type="GO" id="GO:0005524">
    <property type="term" value="F:ATP binding"/>
    <property type="evidence" value="ECO:0007669"/>
    <property type="project" value="UniProtKB-KW"/>
</dbReference>
<dbReference type="GO" id="GO:0031005">
    <property type="term" value="F:filamin binding"/>
    <property type="evidence" value="ECO:0000353"/>
    <property type="project" value="dictyBase"/>
</dbReference>
<dbReference type="GO" id="GO:0016301">
    <property type="term" value="F:kinase activity"/>
    <property type="evidence" value="ECO:0000315"/>
    <property type="project" value="dictyBase"/>
</dbReference>
<dbReference type="GO" id="GO:0004707">
    <property type="term" value="F:MAP kinase activity"/>
    <property type="evidence" value="ECO:0000314"/>
    <property type="project" value="dictyBase"/>
</dbReference>
<dbReference type="GO" id="GO:0004672">
    <property type="term" value="F:protein kinase activity"/>
    <property type="evidence" value="ECO:0000314"/>
    <property type="project" value="dictyBase"/>
</dbReference>
<dbReference type="GO" id="GO:0106310">
    <property type="term" value="F:protein serine kinase activity"/>
    <property type="evidence" value="ECO:0007669"/>
    <property type="project" value="RHEA"/>
</dbReference>
<dbReference type="GO" id="GO:0004674">
    <property type="term" value="F:protein serine/threonine kinase activity"/>
    <property type="evidence" value="ECO:0000318"/>
    <property type="project" value="GO_Central"/>
</dbReference>
<dbReference type="GO" id="GO:0031267">
    <property type="term" value="F:small GTPase binding"/>
    <property type="evidence" value="ECO:0000353"/>
    <property type="project" value="dictyBase"/>
</dbReference>
<dbReference type="GO" id="GO:0140582">
    <property type="term" value="P:adenylate cyclase-activating G protein-coupled cAMP receptor signaling pathway"/>
    <property type="evidence" value="ECO:0000314"/>
    <property type="project" value="dictyBase"/>
</dbReference>
<dbReference type="GO" id="GO:0031152">
    <property type="term" value="P:aggregation involved in sorocarp development"/>
    <property type="evidence" value="ECO:0000315"/>
    <property type="project" value="dictyBase"/>
</dbReference>
<dbReference type="GO" id="GO:0051301">
    <property type="term" value="P:cell division"/>
    <property type="evidence" value="ECO:0007669"/>
    <property type="project" value="UniProtKB-KW"/>
</dbReference>
<dbReference type="GO" id="GO:0007166">
    <property type="term" value="P:cell surface receptor signaling pathway"/>
    <property type="evidence" value="ECO:0000315"/>
    <property type="project" value="dictyBase"/>
</dbReference>
<dbReference type="GO" id="GO:0043327">
    <property type="term" value="P:chemotaxis to cAMP"/>
    <property type="evidence" value="ECO:0000314"/>
    <property type="project" value="dictyBase"/>
</dbReference>
<dbReference type="GO" id="GO:0043326">
    <property type="term" value="P:chemotaxis to folate"/>
    <property type="evidence" value="ECO:0000315"/>
    <property type="project" value="dictyBase"/>
</dbReference>
<dbReference type="GO" id="GO:0070371">
    <property type="term" value="P:ERK1 and ERK2 cascade"/>
    <property type="evidence" value="ECO:0000315"/>
    <property type="project" value="dictyBase"/>
</dbReference>
<dbReference type="GO" id="GO:0007186">
    <property type="term" value="P:G protein-coupled receptor signaling pathway"/>
    <property type="evidence" value="ECO:0000315"/>
    <property type="project" value="dictyBase"/>
</dbReference>
<dbReference type="GO" id="GO:0035556">
    <property type="term" value="P:intracellular signal transduction"/>
    <property type="evidence" value="ECO:0000318"/>
    <property type="project" value="GO_Central"/>
</dbReference>
<dbReference type="GO" id="GO:0140676">
    <property type="term" value="P:oscillatory cAMP signaling"/>
    <property type="evidence" value="ECO:0000314"/>
    <property type="project" value="dictyBase"/>
</dbReference>
<dbReference type="GO" id="GO:0010628">
    <property type="term" value="P:positive regulation of gene expression"/>
    <property type="evidence" value="ECO:0000315"/>
    <property type="project" value="dictyBase"/>
</dbReference>
<dbReference type="GO" id="GO:0008104">
    <property type="term" value="P:protein localization"/>
    <property type="evidence" value="ECO:0000315"/>
    <property type="project" value="dictyBase"/>
</dbReference>
<dbReference type="GO" id="GO:1905301">
    <property type="term" value="P:regulation of macropinocytosis"/>
    <property type="evidence" value="ECO:0000315"/>
    <property type="project" value="dictyBase"/>
</dbReference>
<dbReference type="GO" id="GO:0072718">
    <property type="term" value="P:response to cisplatin"/>
    <property type="evidence" value="ECO:0000315"/>
    <property type="project" value="dictyBase"/>
</dbReference>
<dbReference type="GO" id="GO:1903013">
    <property type="term" value="P:response to differentiation-inducing factor 1"/>
    <property type="evidence" value="ECO:0007005"/>
    <property type="project" value="dictyBase"/>
</dbReference>
<dbReference type="GO" id="GO:0032496">
    <property type="term" value="P:response to lipopolysaccharide"/>
    <property type="evidence" value="ECO:0000315"/>
    <property type="project" value="dictyBase"/>
</dbReference>
<dbReference type="GO" id="GO:0031153">
    <property type="term" value="P:slug development involved in sorocarp development"/>
    <property type="evidence" value="ECO:0000314"/>
    <property type="project" value="dictyBase"/>
</dbReference>
<dbReference type="GO" id="GO:0044671">
    <property type="term" value="P:sorocarp spore cell differentiation"/>
    <property type="evidence" value="ECO:0000315"/>
    <property type="project" value="dictyBase"/>
</dbReference>
<dbReference type="CDD" id="cd07852">
    <property type="entry name" value="STKc_MAPK15-like"/>
    <property type="match status" value="1"/>
</dbReference>
<dbReference type="FunFam" id="1.10.510.10:FF:000238">
    <property type="entry name" value="Mitogen-activated protein kinase"/>
    <property type="match status" value="1"/>
</dbReference>
<dbReference type="FunFam" id="3.30.200.20:FF:000166">
    <property type="entry name" value="Mitogen-activated protein kinase"/>
    <property type="match status" value="1"/>
</dbReference>
<dbReference type="Gene3D" id="3.30.200.20">
    <property type="entry name" value="Phosphorylase Kinase, domain 1"/>
    <property type="match status" value="1"/>
</dbReference>
<dbReference type="Gene3D" id="1.10.510.10">
    <property type="entry name" value="Transferase(Phosphotransferase) domain 1"/>
    <property type="match status" value="1"/>
</dbReference>
<dbReference type="InterPro" id="IPR011009">
    <property type="entry name" value="Kinase-like_dom_sf"/>
</dbReference>
<dbReference type="InterPro" id="IPR050117">
    <property type="entry name" value="MAP_kinase"/>
</dbReference>
<dbReference type="InterPro" id="IPR003527">
    <property type="entry name" value="MAP_kinase_CS"/>
</dbReference>
<dbReference type="InterPro" id="IPR000719">
    <property type="entry name" value="Prot_kinase_dom"/>
</dbReference>
<dbReference type="InterPro" id="IPR017441">
    <property type="entry name" value="Protein_kinase_ATP_BS"/>
</dbReference>
<dbReference type="InterPro" id="IPR008271">
    <property type="entry name" value="Ser/Thr_kinase_AS"/>
</dbReference>
<dbReference type="PANTHER" id="PTHR24055">
    <property type="entry name" value="MITOGEN-ACTIVATED PROTEIN KINASE"/>
    <property type="match status" value="1"/>
</dbReference>
<dbReference type="Pfam" id="PF00069">
    <property type="entry name" value="Pkinase"/>
    <property type="match status" value="1"/>
</dbReference>
<dbReference type="SMART" id="SM00220">
    <property type="entry name" value="S_TKc"/>
    <property type="match status" value="1"/>
</dbReference>
<dbReference type="SUPFAM" id="SSF56112">
    <property type="entry name" value="Protein kinase-like (PK-like)"/>
    <property type="match status" value="1"/>
</dbReference>
<dbReference type="PROSITE" id="PS01351">
    <property type="entry name" value="MAPK"/>
    <property type="match status" value="1"/>
</dbReference>
<dbReference type="PROSITE" id="PS00107">
    <property type="entry name" value="PROTEIN_KINASE_ATP"/>
    <property type="match status" value="1"/>
</dbReference>
<dbReference type="PROSITE" id="PS50011">
    <property type="entry name" value="PROTEIN_KINASE_DOM"/>
    <property type="match status" value="1"/>
</dbReference>
<dbReference type="PROSITE" id="PS00108">
    <property type="entry name" value="PROTEIN_KINASE_ST"/>
    <property type="match status" value="1"/>
</dbReference>
<accession>Q54QB1</accession>
<accession>Q7M445</accession>
<protein>
    <recommendedName>
        <fullName>Extracellular signal-regulated kinase 2</fullName>
        <shortName>ERK2</shortName>
        <ecNumber>2.7.11.24</ecNumber>
    </recommendedName>
    <alternativeName>
        <fullName>Defective in aggregation protein C</fullName>
    </alternativeName>
    <alternativeName>
        <fullName>MAP kinase 2</fullName>
    </alternativeName>
</protein>
<comment type="function">
    <text evidence="6">Implicated in the relay of the cAMP chemotactic signal and cell differentiation. Important for receptor-mediated activation of adenylyl cyclase.</text>
</comment>
<comment type="catalytic activity">
    <reaction>
        <text>L-seryl-[protein] + ATP = O-phospho-L-seryl-[protein] + ADP + H(+)</text>
        <dbReference type="Rhea" id="RHEA:17989"/>
        <dbReference type="Rhea" id="RHEA-COMP:9863"/>
        <dbReference type="Rhea" id="RHEA-COMP:11604"/>
        <dbReference type="ChEBI" id="CHEBI:15378"/>
        <dbReference type="ChEBI" id="CHEBI:29999"/>
        <dbReference type="ChEBI" id="CHEBI:30616"/>
        <dbReference type="ChEBI" id="CHEBI:83421"/>
        <dbReference type="ChEBI" id="CHEBI:456216"/>
        <dbReference type="EC" id="2.7.11.24"/>
    </reaction>
</comment>
<comment type="catalytic activity">
    <reaction>
        <text>L-threonyl-[protein] + ATP = O-phospho-L-threonyl-[protein] + ADP + H(+)</text>
        <dbReference type="Rhea" id="RHEA:46608"/>
        <dbReference type="Rhea" id="RHEA-COMP:11060"/>
        <dbReference type="Rhea" id="RHEA-COMP:11605"/>
        <dbReference type="ChEBI" id="CHEBI:15378"/>
        <dbReference type="ChEBI" id="CHEBI:30013"/>
        <dbReference type="ChEBI" id="CHEBI:30616"/>
        <dbReference type="ChEBI" id="CHEBI:61977"/>
        <dbReference type="ChEBI" id="CHEBI:456216"/>
        <dbReference type="EC" id="2.7.11.24"/>
    </reaction>
</comment>
<comment type="cofactor">
    <cofactor evidence="1">
        <name>Mg(2+)</name>
        <dbReference type="ChEBI" id="CHEBI:18420"/>
    </cofactor>
</comment>
<comment type="activity regulation">
    <text evidence="1">Activated by tyrosine and threonine phosphorylation.</text>
</comment>
<comment type="interaction">
    <interactant intactId="EBI-2905550">
        <id>Q54QB1</id>
    </interactant>
    <interactant intactId="EBI-2905587">
        <id>P34042</id>
        <label>gpaD</label>
    </interactant>
    <organismsDiffer>false</organismsDiffer>
    <experiments>2</experiments>
</comment>
<comment type="domain">
    <text evidence="1">The TXY motif contains the threonine and tyrosine residues whose phosphorylation activates the MAP kinases.</text>
</comment>
<comment type="PTM">
    <text evidence="1">Dually phosphorylated on Thr-176 and Tyr-178, which activates the enzyme.</text>
</comment>
<comment type="disruption phenotype">
    <text evidence="5 7">Cells, starved for 8 hours, exhibited a decrease in motility and a severe chemotaxis defect toward a cAMP gradient. Aberrancy in chemotaxis was aggravated in the presence of a strong cAMP gradient. Cells also display defective cytoskeletal remodeling in response to chemoattractant stimulation. Cells are defective in aggregation and display multiple crown-like membranous protrusions, which were enriched not only in F-actin but also in myosin II. This aberrant structure, which was proposed to be less stable and unable to provide necessary traction force for cells to move, is believed to be the reason why cells are less motile than wild-type cells.</text>
</comment>
<comment type="similarity">
    <text evidence="8">Belongs to the protein kinase superfamily. CMGC Ser/Thr protein kinase family. MAP kinase subfamily.</text>
</comment>